<gene>
    <name evidence="3" type="primary">HS6ST1</name>
</gene>
<name>H6ST1_CHICK</name>
<comment type="function">
    <text evidence="3 7">6-O-sulfation enzyme which catalyzes the transfer of sulfate from 3'-phosphoadenosine 5'-phosphosulfate (PAPS) to position 6 of the N-sulfoglucosamine residue (GlcNS) of heparan sulfate (By similarity). May also play a role in limb development.</text>
</comment>
<comment type="catalytic activity">
    <reaction evidence="3">
        <text>alpha-D-glucosaminyl-[heparan sulfate](n) + 3'-phosphoadenylyl sulfate = 6-sulfo-alpha-D-glucosaminyl-[heparan sulfate](n) + adenosine 3',5'-bisphosphate + H(+)</text>
        <dbReference type="Rhea" id="RHEA:56604"/>
        <dbReference type="Rhea" id="RHEA-COMP:9830"/>
        <dbReference type="Rhea" id="RHEA-COMP:14621"/>
        <dbReference type="ChEBI" id="CHEBI:15378"/>
        <dbReference type="ChEBI" id="CHEBI:58339"/>
        <dbReference type="ChEBI" id="CHEBI:58343"/>
        <dbReference type="ChEBI" id="CHEBI:58388"/>
        <dbReference type="ChEBI" id="CHEBI:140604"/>
    </reaction>
</comment>
<comment type="subcellular location">
    <subcellularLocation>
        <location evidence="8">Membrane</location>
        <topology evidence="8">Single-pass type II membrane protein</topology>
    </subcellularLocation>
</comment>
<comment type="developmental stage">
    <text evidence="6">Expressed in the developing wing bud. At stage 31, widely expressed with a lower level in the heart.</text>
</comment>
<comment type="PTM">
    <text evidence="1">N-glycosylated.</text>
</comment>
<comment type="similarity">
    <text evidence="8">Belongs to the sulfotransferase 6 family.</text>
</comment>
<comment type="sequence caution" evidence="8">
    <conflict type="erroneous initiation">
        <sequence resource="EMBL-CDS" id="BAD00705"/>
    </conflict>
</comment>
<protein>
    <recommendedName>
        <fullName evidence="3">Heparan-sulfate 6-O-sulfotransferase 1</fullName>
        <shortName>HS6ST-1</shortName>
        <shortName>cHS6ST-1</shortName>
        <ecNumber evidence="3">2.8.2.-</ecNumber>
    </recommendedName>
</protein>
<reference key="1">
    <citation type="journal article" date="2004" name="J. Biol. Chem.">
        <title>Distinctive expression patterns of heparan sulfate O-sulfotransferases and regional differences in heparan sulfate structure in chick limb buds.</title>
        <authorList>
            <person name="Nogami K."/>
            <person name="Suzuki H."/>
            <person name="Habuchi H."/>
            <person name="Ishiguro N."/>
            <person name="Iwata H."/>
            <person name="Kimata K."/>
        </authorList>
    </citation>
    <scope>NUCLEOTIDE SEQUENCE [MRNA]</scope>
    <scope>DEVELOPMENTAL STAGE</scope>
</reference>
<reference key="2">
    <citation type="journal article" date="2010" name="Dev. Growth Differ.">
        <title>Functional analysis of chick heparan sulfate 6-O-sulfotransferases in limb bud development.</title>
        <authorList>
            <person name="Kobayashi T."/>
            <person name="Habuchi H."/>
            <person name="Nogami K."/>
            <person name="Ashikari-Hada S."/>
            <person name="Tamura K."/>
            <person name="Ide H."/>
            <person name="Kimata K."/>
        </authorList>
    </citation>
    <scope>FUNCTION IN LIMB BUD DEVELOPMENT</scope>
</reference>
<accession>Q76KB2</accession>
<dbReference type="EC" id="2.8.2.-" evidence="3"/>
<dbReference type="EMBL" id="AB093515">
    <property type="protein sequence ID" value="BAD00705.1"/>
    <property type="status" value="ALT_INIT"/>
    <property type="molecule type" value="mRNA"/>
</dbReference>
<dbReference type="RefSeq" id="NP_989813.2">
    <property type="nucleotide sequence ID" value="NM_204482.2"/>
</dbReference>
<dbReference type="SMR" id="Q76KB2"/>
<dbReference type="FunCoup" id="Q76KB2">
    <property type="interactions" value="1875"/>
</dbReference>
<dbReference type="STRING" id="9031.ENSGALP00000003371"/>
<dbReference type="GlyCosmos" id="Q76KB2">
    <property type="glycosylation" value="3 sites, No reported glycans"/>
</dbReference>
<dbReference type="GlyGen" id="Q76KB2">
    <property type="glycosylation" value="4 sites"/>
</dbReference>
<dbReference type="PaxDb" id="9031-ENSGALP00000003371"/>
<dbReference type="Ensembl" id="ENSGALT00010058933.1">
    <property type="protein sequence ID" value="ENSGALP00010035898.1"/>
    <property type="gene ID" value="ENSGALG00010024163.1"/>
</dbReference>
<dbReference type="GeneID" id="395141"/>
<dbReference type="KEGG" id="gga:395141"/>
<dbReference type="CTD" id="9394"/>
<dbReference type="VEuPathDB" id="HostDB:geneid_395141"/>
<dbReference type="eggNOG" id="KOG3955">
    <property type="taxonomic scope" value="Eukaryota"/>
</dbReference>
<dbReference type="GeneTree" id="ENSGT00950000183071"/>
<dbReference type="HOGENOM" id="CLU_027877_3_0_1"/>
<dbReference type="InParanoid" id="Q76KB2"/>
<dbReference type="OMA" id="KNHMQQN"/>
<dbReference type="OrthoDB" id="406981at2759"/>
<dbReference type="PhylomeDB" id="Q76KB2"/>
<dbReference type="Reactome" id="R-GGA-2022928">
    <property type="pathway name" value="HS-GAG biosynthesis"/>
</dbReference>
<dbReference type="PRO" id="PR:Q76KB2"/>
<dbReference type="Proteomes" id="UP000000539">
    <property type="component" value="Chromosome 9"/>
</dbReference>
<dbReference type="Bgee" id="ENSGALG00000002155">
    <property type="expression patterns" value="Expressed in liver and 14 other cell types or tissues"/>
</dbReference>
<dbReference type="GO" id="GO:0016020">
    <property type="term" value="C:membrane"/>
    <property type="evidence" value="ECO:0007669"/>
    <property type="project" value="UniProtKB-SubCell"/>
</dbReference>
<dbReference type="GO" id="GO:0017095">
    <property type="term" value="F:heparan sulfate 6-sulfotransferase activity"/>
    <property type="evidence" value="ECO:0000318"/>
    <property type="project" value="GO_Central"/>
</dbReference>
<dbReference type="GO" id="GO:0060173">
    <property type="term" value="P:limb development"/>
    <property type="evidence" value="ECO:0000314"/>
    <property type="project" value="UniProtKB"/>
</dbReference>
<dbReference type="GO" id="GO:0048666">
    <property type="term" value="P:neuron development"/>
    <property type="evidence" value="ECO:0000250"/>
    <property type="project" value="UniProtKB"/>
</dbReference>
<dbReference type="FunFam" id="3.40.50.300:FF:000347">
    <property type="entry name" value="Heparan-sulfate 6-O-sulfotransferase"/>
    <property type="match status" value="1"/>
</dbReference>
<dbReference type="Gene3D" id="3.40.50.300">
    <property type="entry name" value="P-loop containing nucleotide triphosphate hydrolases"/>
    <property type="match status" value="1"/>
</dbReference>
<dbReference type="InterPro" id="IPR010635">
    <property type="entry name" value="Heparan_SO4-6-sulfoTrfase"/>
</dbReference>
<dbReference type="InterPro" id="IPR027417">
    <property type="entry name" value="P-loop_NTPase"/>
</dbReference>
<dbReference type="InterPro" id="IPR005331">
    <property type="entry name" value="Sulfotransferase"/>
</dbReference>
<dbReference type="PANTHER" id="PTHR12812">
    <property type="entry name" value="HEPARAN SULFATE 6-O-SULFOTRANSFERASE 3"/>
    <property type="match status" value="1"/>
</dbReference>
<dbReference type="PANTHER" id="PTHR12812:SF1">
    <property type="entry name" value="HEPARAN-SULFATE 6-O-SULFOTRANSFERASE 1"/>
    <property type="match status" value="1"/>
</dbReference>
<dbReference type="Pfam" id="PF03567">
    <property type="entry name" value="Sulfotransfer_2"/>
    <property type="match status" value="1"/>
</dbReference>
<dbReference type="SUPFAM" id="SSF52540">
    <property type="entry name" value="P-loop containing nucleoside triphosphate hydrolases"/>
    <property type="match status" value="1"/>
</dbReference>
<sequence length="408" mass="48092">MKRAGRTMVERTSKFLLIVAASVCFMLILYQYVGPGLSLGAPSGRPYAEEPDLFPTPDPHYVKKYYFPVRELERELAFDMKGEDVIVFLHIQKTGGTTFGRHLVQNVRLEVPCDCRPGQKKCTCYRPNRRETWLFSRFSTGWSCGLHADWTELTNCVPGVLGRRESAPNRTPRKFYYITLLRDPVSRYLSEWRHVQRGATWKTSLHMCDGRTPTPEELPSCYEGTDWSGCTLQEFMDCPYNLANNRQVRMLADLSLVGCYNMSFIPENKRAQILLESAKKNLKDMAFFGLTEFQRKTQYLFERTFNLKFIRPFMQYNSTRAGGVEVDNDTIRRIEELNDLDMQLYDYAKDLFQQRYQYKRQLERMEQRIKNREERLLHRSNEALPKEETEEQGRLPTEDYMSHIIEKW</sequence>
<feature type="chain" id="PRO_0000190803" description="Heparan-sulfate 6-O-sulfotransferase 1">
    <location>
        <begin position="1"/>
        <end position="408"/>
    </location>
</feature>
<feature type="topological domain" description="Cytoplasmic" evidence="4">
    <location>
        <begin position="8"/>
        <end position="14"/>
    </location>
</feature>
<feature type="transmembrane region" description="Helical; Signal-anchor for type II membrane protein" evidence="4">
    <location>
        <begin position="15"/>
        <end position="35"/>
    </location>
</feature>
<feature type="topological domain" description="Lumenal" evidence="4">
    <location>
        <begin position="36"/>
        <end position="408"/>
    </location>
</feature>
<feature type="region of interest" description="Disordered" evidence="5">
    <location>
        <begin position="376"/>
        <end position="396"/>
    </location>
</feature>
<feature type="coiled-coil region" evidence="4">
    <location>
        <begin position="348"/>
        <end position="382"/>
    </location>
</feature>
<feature type="active site" description="Proton acceptor" evidence="2">
    <location>
        <position position="147"/>
    </location>
</feature>
<feature type="binding site" evidence="2">
    <location>
        <begin position="90"/>
        <end position="98"/>
    </location>
    <ligand>
        <name>3'-phosphoadenylyl sulfate</name>
        <dbReference type="ChEBI" id="CHEBI:58339"/>
    </ligand>
</feature>
<feature type="binding site" evidence="2">
    <location>
        <begin position="120"/>
        <end position="121"/>
    </location>
    <ligand>
        <name>substrate</name>
    </ligand>
</feature>
<feature type="binding site" evidence="2">
    <location>
        <position position="137"/>
    </location>
    <ligand>
        <name>substrate</name>
    </ligand>
</feature>
<feature type="binding site" evidence="2">
    <location>
        <position position="142"/>
    </location>
    <ligand>
        <name>substrate</name>
    </ligand>
</feature>
<feature type="binding site" evidence="2">
    <location>
        <position position="147"/>
    </location>
    <ligand>
        <name>substrate</name>
    </ligand>
</feature>
<feature type="binding site" evidence="2">
    <location>
        <position position="182"/>
    </location>
    <ligand>
        <name>3'-phosphoadenylyl sulfate</name>
        <dbReference type="ChEBI" id="CHEBI:58339"/>
    </ligand>
</feature>
<feature type="binding site" evidence="2">
    <location>
        <position position="190"/>
    </location>
    <ligand>
        <name>3'-phosphoadenylyl sulfate</name>
        <dbReference type="ChEBI" id="CHEBI:58339"/>
    </ligand>
</feature>
<feature type="binding site" evidence="2">
    <location>
        <position position="194"/>
    </location>
    <ligand>
        <name>substrate</name>
    </ligand>
</feature>
<feature type="binding site" evidence="2">
    <location>
        <position position="201"/>
    </location>
    <ligand>
        <name>substrate</name>
    </ligand>
</feature>
<feature type="binding site" evidence="2">
    <location>
        <begin position="314"/>
        <end position="316"/>
    </location>
    <ligand>
        <name>3'-phosphoadenylyl sulfate</name>
        <dbReference type="ChEBI" id="CHEBI:58339"/>
    </ligand>
</feature>
<feature type="binding site" evidence="2">
    <location>
        <begin position="320"/>
        <end position="321"/>
    </location>
    <ligand>
        <name>3'-phosphoadenylyl sulfate</name>
        <dbReference type="ChEBI" id="CHEBI:58339"/>
    </ligand>
</feature>
<feature type="glycosylation site" description="N-linked (GlcNAc...) asparagine" evidence="4">
    <location>
        <position position="261"/>
    </location>
</feature>
<feature type="glycosylation site" description="N-linked (GlcNAc...) asparagine" evidence="4">
    <location>
        <position position="317"/>
    </location>
</feature>
<feature type="glycosylation site" description="N-linked (GlcNAc...) asparagine" evidence="4">
    <location>
        <position position="328"/>
    </location>
</feature>
<keyword id="KW-0175">Coiled coil</keyword>
<keyword id="KW-0325">Glycoprotein</keyword>
<keyword id="KW-0472">Membrane</keyword>
<keyword id="KW-1185">Reference proteome</keyword>
<keyword id="KW-0735">Signal-anchor</keyword>
<keyword id="KW-0808">Transferase</keyword>
<keyword id="KW-0812">Transmembrane</keyword>
<keyword id="KW-1133">Transmembrane helix</keyword>
<proteinExistence type="evidence at protein level"/>
<organism>
    <name type="scientific">Gallus gallus</name>
    <name type="common">Chicken</name>
    <dbReference type="NCBI Taxonomy" id="9031"/>
    <lineage>
        <taxon>Eukaryota</taxon>
        <taxon>Metazoa</taxon>
        <taxon>Chordata</taxon>
        <taxon>Craniata</taxon>
        <taxon>Vertebrata</taxon>
        <taxon>Euteleostomi</taxon>
        <taxon>Archelosauria</taxon>
        <taxon>Archosauria</taxon>
        <taxon>Dinosauria</taxon>
        <taxon>Saurischia</taxon>
        <taxon>Theropoda</taxon>
        <taxon>Coelurosauria</taxon>
        <taxon>Aves</taxon>
        <taxon>Neognathae</taxon>
        <taxon>Galloanserae</taxon>
        <taxon>Galliformes</taxon>
        <taxon>Phasianidae</taxon>
        <taxon>Phasianinae</taxon>
        <taxon>Gallus</taxon>
    </lineage>
</organism>
<evidence type="ECO:0000250" key="1"/>
<evidence type="ECO:0000250" key="2">
    <source>
        <dbReference type="UniProtKB" id="A0MGZ7"/>
    </source>
</evidence>
<evidence type="ECO:0000250" key="3">
    <source>
        <dbReference type="UniProtKB" id="O60243"/>
    </source>
</evidence>
<evidence type="ECO:0000255" key="4"/>
<evidence type="ECO:0000256" key="5">
    <source>
        <dbReference type="SAM" id="MobiDB-lite"/>
    </source>
</evidence>
<evidence type="ECO:0000269" key="6">
    <source>
    </source>
</evidence>
<evidence type="ECO:0000269" key="7">
    <source>
    </source>
</evidence>
<evidence type="ECO:0000305" key="8"/>